<gene>
    <name evidence="6" type="primary">GNAT3</name>
    <name evidence="8" type="ordered locus">At4g19985</name>
    <name evidence="9" type="ORF">F18F4</name>
</gene>
<feature type="transit peptide" description="Chloroplast" evidence="3">
    <location>
        <begin position="1"/>
        <end position="93"/>
    </location>
</feature>
<feature type="chain" id="PRO_0000457952" description="GCN5-related N-acetyltransferase 3, chloroplastic">
    <location>
        <begin position="94"/>
        <end position="237"/>
    </location>
</feature>
<feature type="domain" description="N-acetyltransferase" evidence="4">
    <location>
        <begin position="94"/>
        <end position="237"/>
    </location>
</feature>
<feature type="binding site" evidence="2">
    <location>
        <begin position="171"/>
        <end position="173"/>
    </location>
    <ligand>
        <name>acetyl-CoA</name>
        <dbReference type="ChEBI" id="CHEBI:57288"/>
    </ligand>
</feature>
<feature type="binding site" evidence="2">
    <location>
        <begin position="179"/>
        <end position="184"/>
    </location>
    <ligand>
        <name>acetyl-CoA</name>
        <dbReference type="ChEBI" id="CHEBI:57288"/>
    </ligand>
</feature>
<feature type="binding site" evidence="2">
    <location>
        <begin position="207"/>
        <end position="209"/>
    </location>
    <ligand>
        <name>acetyl-CoA</name>
        <dbReference type="ChEBI" id="CHEBI:57288"/>
    </ligand>
</feature>
<feature type="binding site" evidence="2">
    <location>
        <position position="214"/>
    </location>
    <ligand>
        <name>acetyl-CoA</name>
        <dbReference type="ChEBI" id="CHEBI:57288"/>
    </ligand>
</feature>
<feature type="sequence conflict" description="In Ref. 4; AAM63712." evidence="7" ref="4">
    <original>G</original>
    <variation>V</variation>
    <location>
        <position position="5"/>
    </location>
</feature>
<feature type="sequence conflict" description="In Ref. 4; AAM63712." evidence="7" ref="4">
    <original>K</original>
    <variation>N</variation>
    <location>
        <position position="69"/>
    </location>
</feature>
<feature type="sequence conflict" description="In Ref. 4; AAM63712." evidence="7" ref="4">
    <original>IVSV</original>
    <variation>VVSM</variation>
    <location>
        <begin position="92"/>
        <end position="95"/>
    </location>
</feature>
<feature type="sequence conflict" description="In Ref. 4; AAM63712." evidence="7" ref="4">
    <original>LY</original>
    <variation>FN</variation>
    <location>
        <begin position="120"/>
        <end position="121"/>
    </location>
</feature>
<keyword id="KW-0012">Acyltransferase</keyword>
<keyword id="KW-0150">Chloroplast</keyword>
<keyword id="KW-0934">Plastid</keyword>
<keyword id="KW-1185">Reference proteome</keyword>
<keyword id="KW-0808">Transferase</keyword>
<keyword id="KW-0809">Transit peptide</keyword>
<evidence type="ECO:0000250" key="1">
    <source>
        <dbReference type="UniProtKB" id="Q7X9V3"/>
    </source>
</evidence>
<evidence type="ECO:0000250" key="2">
    <source>
        <dbReference type="UniProtKB" id="Q96F10"/>
    </source>
</evidence>
<evidence type="ECO:0000255" key="3"/>
<evidence type="ECO:0000255" key="4">
    <source>
        <dbReference type="PROSITE-ProRule" id="PRU00532"/>
    </source>
</evidence>
<evidence type="ECO:0000269" key="5">
    <source>
    </source>
</evidence>
<evidence type="ECO:0000303" key="6">
    <source>
    </source>
</evidence>
<evidence type="ECO:0000305" key="7"/>
<evidence type="ECO:0000312" key="8">
    <source>
        <dbReference type="Araport" id="AT4G19985"/>
    </source>
</evidence>
<evidence type="ECO:0000312" key="9">
    <source>
        <dbReference type="EMBL" id="CAA16606.1"/>
    </source>
</evidence>
<name>GNAT3_ARATH</name>
<accession>Q940H2</accession>
<accession>O49425</accession>
<accession>Q8LCE0</accession>
<reference key="1">
    <citation type="journal article" date="1999" name="Nature">
        <title>Sequence and analysis of chromosome 4 of the plant Arabidopsis thaliana.</title>
        <authorList>
            <person name="Mayer K.F.X."/>
            <person name="Schueller C."/>
            <person name="Wambutt R."/>
            <person name="Murphy G."/>
            <person name="Volckaert G."/>
            <person name="Pohl T."/>
            <person name="Duesterhoeft A."/>
            <person name="Stiekema W."/>
            <person name="Entian K.-D."/>
            <person name="Terryn N."/>
            <person name="Harris B."/>
            <person name="Ansorge W."/>
            <person name="Brandt P."/>
            <person name="Grivell L.A."/>
            <person name="Rieger M."/>
            <person name="Weichselgartner M."/>
            <person name="de Simone V."/>
            <person name="Obermaier B."/>
            <person name="Mache R."/>
            <person name="Mueller M."/>
            <person name="Kreis M."/>
            <person name="Delseny M."/>
            <person name="Puigdomenech P."/>
            <person name="Watson M."/>
            <person name="Schmidtheini T."/>
            <person name="Reichert B."/>
            <person name="Portetelle D."/>
            <person name="Perez-Alonso M."/>
            <person name="Boutry M."/>
            <person name="Bancroft I."/>
            <person name="Vos P."/>
            <person name="Hoheisel J."/>
            <person name="Zimmermann W."/>
            <person name="Wedler H."/>
            <person name="Ridley P."/>
            <person name="Langham S.-A."/>
            <person name="McCullagh B."/>
            <person name="Bilham L."/>
            <person name="Robben J."/>
            <person name="van der Schueren J."/>
            <person name="Grymonprez B."/>
            <person name="Chuang Y.-J."/>
            <person name="Vandenbussche F."/>
            <person name="Braeken M."/>
            <person name="Weltjens I."/>
            <person name="Voet M."/>
            <person name="Bastiaens I."/>
            <person name="Aert R."/>
            <person name="Defoor E."/>
            <person name="Weitzenegger T."/>
            <person name="Bothe G."/>
            <person name="Ramsperger U."/>
            <person name="Hilbert H."/>
            <person name="Braun M."/>
            <person name="Holzer E."/>
            <person name="Brandt A."/>
            <person name="Peters S."/>
            <person name="van Staveren M."/>
            <person name="Dirkse W."/>
            <person name="Mooijman P."/>
            <person name="Klein Lankhorst R."/>
            <person name="Rose M."/>
            <person name="Hauf J."/>
            <person name="Koetter P."/>
            <person name="Berneiser S."/>
            <person name="Hempel S."/>
            <person name="Feldpausch M."/>
            <person name="Lamberth S."/>
            <person name="Van den Daele H."/>
            <person name="De Keyser A."/>
            <person name="Buysshaert C."/>
            <person name="Gielen J."/>
            <person name="Villarroel R."/>
            <person name="De Clercq R."/>
            <person name="van Montagu M."/>
            <person name="Rogers J."/>
            <person name="Cronin A."/>
            <person name="Quail M.A."/>
            <person name="Bray-Allen S."/>
            <person name="Clark L."/>
            <person name="Doggett J."/>
            <person name="Hall S."/>
            <person name="Kay M."/>
            <person name="Lennard N."/>
            <person name="McLay K."/>
            <person name="Mayes R."/>
            <person name="Pettett A."/>
            <person name="Rajandream M.A."/>
            <person name="Lyne M."/>
            <person name="Benes V."/>
            <person name="Rechmann S."/>
            <person name="Borkova D."/>
            <person name="Bloecker H."/>
            <person name="Scharfe M."/>
            <person name="Grimm M."/>
            <person name="Loehnert T.-H."/>
            <person name="Dose S."/>
            <person name="de Haan M."/>
            <person name="Maarse A.C."/>
            <person name="Schaefer M."/>
            <person name="Mueller-Auer S."/>
            <person name="Gabel C."/>
            <person name="Fuchs M."/>
            <person name="Fartmann B."/>
            <person name="Granderath K."/>
            <person name="Dauner D."/>
            <person name="Herzl A."/>
            <person name="Neumann S."/>
            <person name="Argiriou A."/>
            <person name="Vitale D."/>
            <person name="Liguori R."/>
            <person name="Piravandi E."/>
            <person name="Massenet O."/>
            <person name="Quigley F."/>
            <person name="Clabauld G."/>
            <person name="Muendlein A."/>
            <person name="Felber R."/>
            <person name="Schnabl S."/>
            <person name="Hiller R."/>
            <person name="Schmidt W."/>
            <person name="Lecharny A."/>
            <person name="Aubourg S."/>
            <person name="Chefdor F."/>
            <person name="Cooke R."/>
            <person name="Berger C."/>
            <person name="Monfort A."/>
            <person name="Casacuberta E."/>
            <person name="Gibbons T."/>
            <person name="Weber N."/>
            <person name="Vandenbol M."/>
            <person name="Bargues M."/>
            <person name="Terol J."/>
            <person name="Torres A."/>
            <person name="Perez-Perez A."/>
            <person name="Purnelle B."/>
            <person name="Bent E."/>
            <person name="Johnson S."/>
            <person name="Tacon D."/>
            <person name="Jesse T."/>
            <person name="Heijnen L."/>
            <person name="Schwarz S."/>
            <person name="Scholler P."/>
            <person name="Heber S."/>
            <person name="Francs P."/>
            <person name="Bielke C."/>
            <person name="Frishman D."/>
            <person name="Haase D."/>
            <person name="Lemcke K."/>
            <person name="Mewes H.-W."/>
            <person name="Stocker S."/>
            <person name="Zaccaria P."/>
            <person name="Bevan M."/>
            <person name="Wilson R.K."/>
            <person name="de la Bastide M."/>
            <person name="Habermann K."/>
            <person name="Parnell L."/>
            <person name="Dedhia N."/>
            <person name="Gnoj L."/>
            <person name="Schutz K."/>
            <person name="Huang E."/>
            <person name="Spiegel L."/>
            <person name="Sekhon M."/>
            <person name="Murray J."/>
            <person name="Sheet P."/>
            <person name="Cordes M."/>
            <person name="Abu-Threideh J."/>
            <person name="Stoneking T."/>
            <person name="Kalicki J."/>
            <person name="Graves T."/>
            <person name="Harmon G."/>
            <person name="Edwards J."/>
            <person name="Latreille P."/>
            <person name="Courtney L."/>
            <person name="Cloud J."/>
            <person name="Abbott A."/>
            <person name="Scott K."/>
            <person name="Johnson D."/>
            <person name="Minx P."/>
            <person name="Bentley D."/>
            <person name="Fulton B."/>
            <person name="Miller N."/>
            <person name="Greco T."/>
            <person name="Kemp K."/>
            <person name="Kramer J."/>
            <person name="Fulton L."/>
            <person name="Mardis E."/>
            <person name="Dante M."/>
            <person name="Pepin K."/>
            <person name="Hillier L.W."/>
            <person name="Nelson J."/>
            <person name="Spieth J."/>
            <person name="Ryan E."/>
            <person name="Andrews S."/>
            <person name="Geisel C."/>
            <person name="Layman D."/>
            <person name="Du H."/>
            <person name="Ali J."/>
            <person name="Berghoff A."/>
            <person name="Jones K."/>
            <person name="Drone K."/>
            <person name="Cotton M."/>
            <person name="Joshu C."/>
            <person name="Antonoiu B."/>
            <person name="Zidanic M."/>
            <person name="Strong C."/>
            <person name="Sun H."/>
            <person name="Lamar B."/>
            <person name="Yordan C."/>
            <person name="Ma P."/>
            <person name="Zhong J."/>
            <person name="Preston R."/>
            <person name="Vil D."/>
            <person name="Shekher M."/>
            <person name="Matero A."/>
            <person name="Shah R."/>
            <person name="Swaby I.K."/>
            <person name="O'Shaughnessy A."/>
            <person name="Rodriguez M."/>
            <person name="Hoffman J."/>
            <person name="Till S."/>
            <person name="Granat S."/>
            <person name="Shohdy N."/>
            <person name="Hasegawa A."/>
            <person name="Hameed A."/>
            <person name="Lodhi M."/>
            <person name="Johnson A."/>
            <person name="Chen E."/>
            <person name="Marra M.A."/>
            <person name="Martienssen R."/>
            <person name="McCombie W.R."/>
        </authorList>
    </citation>
    <scope>NUCLEOTIDE SEQUENCE [LARGE SCALE GENOMIC DNA]</scope>
    <source>
        <strain>cv. Columbia</strain>
    </source>
</reference>
<reference key="2">
    <citation type="journal article" date="2017" name="Plant J.">
        <title>Araport11: a complete reannotation of the Arabidopsis thaliana reference genome.</title>
        <authorList>
            <person name="Cheng C.Y."/>
            <person name="Krishnakumar V."/>
            <person name="Chan A.P."/>
            <person name="Thibaud-Nissen F."/>
            <person name="Schobel S."/>
            <person name="Town C.D."/>
        </authorList>
    </citation>
    <scope>GENOME REANNOTATION</scope>
    <source>
        <strain>cv. Columbia</strain>
    </source>
</reference>
<reference key="3">
    <citation type="journal article" date="2003" name="Science">
        <title>Empirical analysis of transcriptional activity in the Arabidopsis genome.</title>
        <authorList>
            <person name="Yamada K."/>
            <person name="Lim J."/>
            <person name="Dale J.M."/>
            <person name="Chen H."/>
            <person name="Shinn P."/>
            <person name="Palm C.J."/>
            <person name="Southwick A.M."/>
            <person name="Wu H.C."/>
            <person name="Kim C.J."/>
            <person name="Nguyen M."/>
            <person name="Pham P.K."/>
            <person name="Cheuk R.F."/>
            <person name="Karlin-Newmann G."/>
            <person name="Liu S.X."/>
            <person name="Lam B."/>
            <person name="Sakano H."/>
            <person name="Wu T."/>
            <person name="Yu G."/>
            <person name="Miranda M."/>
            <person name="Quach H.L."/>
            <person name="Tripp M."/>
            <person name="Chang C.H."/>
            <person name="Lee J.M."/>
            <person name="Toriumi M.J."/>
            <person name="Chan M.M."/>
            <person name="Tang C.C."/>
            <person name="Onodera C.S."/>
            <person name="Deng J.M."/>
            <person name="Akiyama K."/>
            <person name="Ansari Y."/>
            <person name="Arakawa T."/>
            <person name="Banh J."/>
            <person name="Banno F."/>
            <person name="Bowser L."/>
            <person name="Brooks S.Y."/>
            <person name="Carninci P."/>
            <person name="Chao Q."/>
            <person name="Choy N."/>
            <person name="Enju A."/>
            <person name="Goldsmith A.D."/>
            <person name="Gurjal M."/>
            <person name="Hansen N.F."/>
            <person name="Hayashizaki Y."/>
            <person name="Johnson-Hopson C."/>
            <person name="Hsuan V.W."/>
            <person name="Iida K."/>
            <person name="Karnes M."/>
            <person name="Khan S."/>
            <person name="Koesema E."/>
            <person name="Ishida J."/>
            <person name="Jiang P.X."/>
            <person name="Jones T."/>
            <person name="Kawai J."/>
            <person name="Kamiya A."/>
            <person name="Meyers C."/>
            <person name="Nakajima M."/>
            <person name="Narusaka M."/>
            <person name="Seki M."/>
            <person name="Sakurai T."/>
            <person name="Satou M."/>
            <person name="Tamse R."/>
            <person name="Vaysberg M."/>
            <person name="Wallender E.K."/>
            <person name="Wong C."/>
            <person name="Yamamura Y."/>
            <person name="Yuan S."/>
            <person name="Shinozaki K."/>
            <person name="Davis R.W."/>
            <person name="Theologis A."/>
            <person name="Ecker J.R."/>
        </authorList>
    </citation>
    <scope>NUCLEOTIDE SEQUENCE [LARGE SCALE MRNA]</scope>
    <source>
        <strain>cv. Columbia</strain>
    </source>
</reference>
<reference key="4">
    <citation type="submission" date="2002-03" db="EMBL/GenBank/DDBJ databases">
        <title>Full-length cDNA from Arabidopsis thaliana.</title>
        <authorList>
            <person name="Brover V.V."/>
            <person name="Troukhan M.E."/>
            <person name="Alexandrov N.A."/>
            <person name="Lu Y.-P."/>
            <person name="Flavell R.B."/>
            <person name="Feldmann K.A."/>
        </authorList>
    </citation>
    <scope>NUCLEOTIDE SEQUENCE [LARGE SCALE MRNA]</scope>
</reference>
<reference key="5">
    <citation type="journal article" date="2020" name="Mol. Syst. Biol.">
        <title>Dual lysine and N-terminal acetyltransferases reveal the complexity underpinning protein acetylation.</title>
        <authorList>
            <person name="Bienvenut W.V."/>
            <person name="Bruenje A."/>
            <person name="Boyer J.-B."/>
            <person name="Muehlenbeck J.S."/>
            <person name="Bernal G."/>
            <person name="Lassowskat I."/>
            <person name="Dian C."/>
            <person name="Linster E."/>
            <person name="Dinh T.V."/>
            <person name="Koskela M.M."/>
            <person name="Jung V."/>
            <person name="Seidel J."/>
            <person name="Schyrba L.K."/>
            <person name="Ivanauskaite A."/>
            <person name="Eirich J."/>
            <person name="Hell R."/>
            <person name="Schwarzer D."/>
            <person name="Mulo P."/>
            <person name="Wirtz M."/>
            <person name="Meinnel T."/>
            <person name="Giglione C."/>
            <person name="Finkemeier I."/>
        </authorList>
    </citation>
    <scope>FUNCTION</scope>
    <scope>CATALYTIC ACTIVITY</scope>
    <scope>SUBCELLULAR LOCATION</scope>
    <scope>TISSUE SPECIFICITY</scope>
    <scope>AUTOACETYLATION</scope>
    <scope>GENE FAMILY</scope>
    <scope>NOMENCLATURE</scope>
    <source>
        <strain>cv. Columbia</strain>
    </source>
</reference>
<sequence length="237" mass="26540">MGLVGCVGKSSLVSMELRWARRRKSDNAASALPRSIPIYISTLKKDINLEELRNLYSLCNHSCNRLSEKDSNVEKIVDMKKLRRAISRSDVIVSVFCKPQHVDVDDAVLYSEEESLSSSLYTSEFGRQNKDDSFLGDLFQNAVPLTPSNGQLVGFGRAYSDYGLTASIHDLMVLPSLQRMGIGKLIVNRIVRLLTSRDIYDIAALCFEDERPFFKACGFGDDRMGSTTMMFTKSLEA</sequence>
<organism>
    <name type="scientific">Arabidopsis thaliana</name>
    <name type="common">Mouse-ear cress</name>
    <dbReference type="NCBI Taxonomy" id="3702"/>
    <lineage>
        <taxon>Eukaryota</taxon>
        <taxon>Viridiplantae</taxon>
        <taxon>Streptophyta</taxon>
        <taxon>Embryophyta</taxon>
        <taxon>Tracheophyta</taxon>
        <taxon>Spermatophyta</taxon>
        <taxon>Magnoliopsida</taxon>
        <taxon>eudicotyledons</taxon>
        <taxon>Gunneridae</taxon>
        <taxon>Pentapetalae</taxon>
        <taxon>rosids</taxon>
        <taxon>malvids</taxon>
        <taxon>Brassicales</taxon>
        <taxon>Brassicaceae</taxon>
        <taxon>Camelineae</taxon>
        <taxon>Arabidopsis</taxon>
    </lineage>
</organism>
<protein>
    <recommendedName>
        <fullName evidence="6">GCN5-related N-acetyltransferase 3, chloroplastic</fullName>
        <ecNumber evidence="4 5">2.3.1.48</ecNumber>
    </recommendedName>
</protein>
<comment type="function">
    <text evidence="5">Protein acetyltransferase with dual specificity triggering both N-alpha-acetylation (NTA) and epsilon-lysine acetylation (KA), possibly with a low efficiency or toward specific plastid substrates.</text>
</comment>
<comment type="catalytic activity">
    <reaction evidence="5">
        <text>an N-terminal L-alpha-aminoacyl-[protein] + acetyl-CoA = N-terminal N(alpha)-acetyl-L-alpha-aminoacyl-[protein] + CoA + H(+)</text>
        <dbReference type="Rhea" id="RHEA:21028"/>
        <dbReference type="Rhea" id="RHEA-COMP:10636"/>
        <dbReference type="Rhea" id="RHEA-COMP:15589"/>
        <dbReference type="ChEBI" id="CHEBI:15378"/>
        <dbReference type="ChEBI" id="CHEBI:57287"/>
        <dbReference type="ChEBI" id="CHEBI:57288"/>
        <dbReference type="ChEBI" id="CHEBI:78597"/>
        <dbReference type="ChEBI" id="CHEBI:78598"/>
    </reaction>
</comment>
<comment type="catalytic activity">
    <reaction evidence="5">
        <text>L-lysyl-[protein] + acetyl-CoA = N(6)-acetyl-L-lysyl-[protein] + CoA + H(+)</text>
        <dbReference type="Rhea" id="RHEA:45948"/>
        <dbReference type="Rhea" id="RHEA-COMP:9752"/>
        <dbReference type="Rhea" id="RHEA-COMP:10731"/>
        <dbReference type="ChEBI" id="CHEBI:15378"/>
        <dbReference type="ChEBI" id="CHEBI:29969"/>
        <dbReference type="ChEBI" id="CHEBI:57287"/>
        <dbReference type="ChEBI" id="CHEBI:57288"/>
        <dbReference type="ChEBI" id="CHEBI:61930"/>
        <dbReference type="EC" id="2.3.1.48"/>
    </reaction>
</comment>
<comment type="subunit">
    <text evidence="1">Oligomer.</text>
</comment>
<comment type="subcellular location">
    <subcellularLocation>
        <location evidence="5">Plastid</location>
        <location evidence="5">Chloroplast</location>
    </subcellularLocation>
</comment>
<comment type="tissue specificity">
    <text evidence="5">Expressed in green tissues.</text>
</comment>
<comment type="PTM">
    <text evidence="5">Autoacetylated.</text>
</comment>
<comment type="similarity">
    <text evidence="7">Belongs to the acetyltransferase family. GNAT subfamily.</text>
</comment>
<comment type="sequence caution" evidence="7">
    <conflict type="erroneous gene model prediction">
        <sequence resource="EMBL-CDS" id="CAA16606"/>
    </conflict>
</comment>
<comment type="sequence caution" evidence="7">
    <conflict type="erroneous gene model prediction">
        <sequence resource="EMBL-CDS" id="CAB78998"/>
    </conflict>
</comment>
<proteinExistence type="evidence at protein level"/>
<dbReference type="EC" id="2.3.1.48" evidence="4 5"/>
<dbReference type="EMBL" id="AL021637">
    <property type="protein sequence ID" value="CAA16606.1"/>
    <property type="status" value="ALT_SEQ"/>
    <property type="molecule type" value="Genomic_DNA"/>
</dbReference>
<dbReference type="EMBL" id="AL161552">
    <property type="protein sequence ID" value="CAB78998.1"/>
    <property type="status" value="ALT_SEQ"/>
    <property type="molecule type" value="Genomic_DNA"/>
</dbReference>
<dbReference type="EMBL" id="CP002687">
    <property type="protein sequence ID" value="AEE84255.1"/>
    <property type="molecule type" value="Genomic_DNA"/>
</dbReference>
<dbReference type="EMBL" id="CP002687">
    <property type="protein sequence ID" value="ANM67599.1"/>
    <property type="molecule type" value="Genomic_DNA"/>
</dbReference>
<dbReference type="EMBL" id="AY054636">
    <property type="protein sequence ID" value="AAK96827.1"/>
    <property type="molecule type" value="mRNA"/>
</dbReference>
<dbReference type="EMBL" id="AY072491">
    <property type="protein sequence ID" value="AAL66906.1"/>
    <property type="molecule type" value="mRNA"/>
</dbReference>
<dbReference type="EMBL" id="AY086655">
    <property type="protein sequence ID" value="AAM63712.1"/>
    <property type="molecule type" value="mRNA"/>
</dbReference>
<dbReference type="PIR" id="T04882">
    <property type="entry name" value="T04882"/>
</dbReference>
<dbReference type="RefSeq" id="NP_001329418.1">
    <property type="nucleotide sequence ID" value="NM_001341385.1"/>
</dbReference>
<dbReference type="RefSeq" id="NP_567592.1">
    <property type="nucleotide sequence ID" value="NM_118117.4"/>
</dbReference>
<dbReference type="SMR" id="Q940H2"/>
<dbReference type="FunCoup" id="Q940H2">
    <property type="interactions" value="1064"/>
</dbReference>
<dbReference type="iPTMnet" id="Q940H2"/>
<dbReference type="PaxDb" id="3702-AT4G19985.1"/>
<dbReference type="ProteomicsDB" id="179390"/>
<dbReference type="EnsemblPlants" id="AT4G19985.1">
    <property type="protein sequence ID" value="AT4G19985.1"/>
    <property type="gene ID" value="AT4G19985"/>
</dbReference>
<dbReference type="EnsemblPlants" id="AT4G19985.6">
    <property type="protein sequence ID" value="AT4G19985.6"/>
    <property type="gene ID" value="AT4G19985"/>
</dbReference>
<dbReference type="GeneID" id="827743"/>
<dbReference type="Gramene" id="AT4G19985.1">
    <property type="protein sequence ID" value="AT4G19985.1"/>
    <property type="gene ID" value="AT4G19985"/>
</dbReference>
<dbReference type="Gramene" id="AT4G19985.6">
    <property type="protein sequence ID" value="AT4G19985.6"/>
    <property type="gene ID" value="AT4G19985"/>
</dbReference>
<dbReference type="KEGG" id="ath:AT4G19985"/>
<dbReference type="Araport" id="AT4G19985"/>
<dbReference type="TAIR" id="AT4G19985"/>
<dbReference type="eggNOG" id="ENOG502RXWT">
    <property type="taxonomic scope" value="Eukaryota"/>
</dbReference>
<dbReference type="HOGENOM" id="CLU_092964_0_0_1"/>
<dbReference type="OrthoDB" id="2744543at2759"/>
<dbReference type="PRO" id="PR:Q940H2"/>
<dbReference type="Proteomes" id="UP000006548">
    <property type="component" value="Chromosome 4"/>
</dbReference>
<dbReference type="ExpressionAtlas" id="Q940H2">
    <property type="expression patterns" value="baseline and differential"/>
</dbReference>
<dbReference type="GO" id="GO:0009507">
    <property type="term" value="C:chloroplast"/>
    <property type="evidence" value="ECO:0000314"/>
    <property type="project" value="TAIR"/>
</dbReference>
<dbReference type="GO" id="GO:0004343">
    <property type="term" value="F:glucosamine 6-phosphate N-acetyltransferase activity"/>
    <property type="evidence" value="ECO:0007669"/>
    <property type="project" value="UniProtKB-EC"/>
</dbReference>
<dbReference type="GO" id="GO:0008080">
    <property type="term" value="F:N-acetyltransferase activity"/>
    <property type="evidence" value="ECO:0000314"/>
    <property type="project" value="UniProtKB"/>
</dbReference>
<dbReference type="GO" id="GO:0006474">
    <property type="term" value="P:N-terminal protein amino acid acetylation"/>
    <property type="evidence" value="ECO:0000314"/>
    <property type="project" value="UniProtKB"/>
</dbReference>
<dbReference type="GO" id="GO:0018394">
    <property type="term" value="P:peptidyl-lysine acetylation"/>
    <property type="evidence" value="ECO:0000314"/>
    <property type="project" value="UniProtKB"/>
</dbReference>
<dbReference type="CDD" id="cd04301">
    <property type="entry name" value="NAT_SF"/>
    <property type="match status" value="1"/>
</dbReference>
<dbReference type="Gene3D" id="3.40.630.30">
    <property type="match status" value="1"/>
</dbReference>
<dbReference type="InterPro" id="IPR016181">
    <property type="entry name" value="Acyl_CoA_acyltransferase"/>
</dbReference>
<dbReference type="InterPro" id="IPR000182">
    <property type="entry name" value="GNAT_dom"/>
</dbReference>
<dbReference type="InterPro" id="IPR039143">
    <property type="entry name" value="GNPNAT1-like"/>
</dbReference>
<dbReference type="PANTHER" id="PTHR13355:SF15">
    <property type="entry name" value="GCN5-RELATED N-ACETYLTRANSFERASE 3, CHLOROPLASTIC"/>
    <property type="match status" value="1"/>
</dbReference>
<dbReference type="PANTHER" id="PTHR13355">
    <property type="entry name" value="GLUCOSAMINE 6-PHOSPHATE N-ACETYLTRANSFERASE"/>
    <property type="match status" value="1"/>
</dbReference>
<dbReference type="Pfam" id="PF00583">
    <property type="entry name" value="Acetyltransf_1"/>
    <property type="match status" value="1"/>
</dbReference>
<dbReference type="SUPFAM" id="SSF55729">
    <property type="entry name" value="Acyl-CoA N-acyltransferases (Nat)"/>
    <property type="match status" value="1"/>
</dbReference>
<dbReference type="PROSITE" id="PS51186">
    <property type="entry name" value="GNAT"/>
    <property type="match status" value="1"/>
</dbReference>